<proteinExistence type="evidence at protein level"/>
<comment type="function">
    <text evidence="3 4 5 6 7 10">Acyl-CoA ligase; part of the gene cluster that mediates the biosynthesis of pneumocandins, lipohexapeptides of the echinocandin family that prevent fungal cell wall formation by non-competitive inhibition of beta-1,3-glucan synthase (PubMed:27705900). The 10,12-dimethylmyristoyl side chain is synthesized by the reducing polyketide synthase gloL/GLPKS4 (PubMed:27494047). The thioesterase gloN/GLHYD exclusively interacts with gloL/GLPKS4 to maintain turnover of the polyketide side chain (PubMed:27494047). The 10R,12S-dimethylmyristic acid is then transferred to the first thiolation domain of the nonribosomal peptide synthetase gloA/GLNRPS4 by the acyl-AMP ligase gloD/GLligase, followed by its acylation to L-ornithine to trigger elongation of the cyclic hexapeptide (PubMed:27494047). L-ornithine, 4R-hydroxyl-L-proline (generated from L-proline by the dioxygenase gloF/GLOXY2), 3S-hydroxyl-L-homotyrosine (generated by gloG/GLHtyB, gloH/GLHtyA, gloI/GLHtyC, gloJ/GLHtyD and hydroxylated at C-3 by the dioxygenase gloM/GLOXY1), 3R-hydroxyl-L-glutamine (generated from L-glutamine probably by the dioxygenase gloE/GLOXY3) and 3S-hydroxyl-L-proline (generated from L-proline by the dioxygenase gloF/GLOXY2 to yield pneumocandin B0), or 3S-hydroxyl-4S-methyl-L-proline (generated from L-leucine by the dioxygenase gloC/GLOXY4 to yield pneumocandin A0) are sequentially added to the growing chain (PubMed:25270390, PubMed:25527531, PubMed:25879325). The last C domain of gloA/GLNRPS4 is proposed to be responsible for cyclization by condensation to form the peptide bond between L-ornithine and 3S-hydroxyl-4S-methyl-L-proline (for pneumocandin A0) or 3S-hydroxyl-L-proline (for pneumocandin B0). Finally, the subsequent C-4 hydroxylation of 3S-hydroxyl-L-homotyrosine and L-ornithine dihydroxylation at C-4 and C-5 are performed by the cytochrome P450 monooxygenases gloP/GLP450-1 and gloO/GLP450-2, respectively (PubMed:25879325).</text>
</comment>
<comment type="pathway">
    <text evidence="6 12">Mycotoxin biosynthesis.</text>
</comment>
<comment type="domain">
    <text evidence="2">Both substrate-binding domains (SBD1 and SBD2) are involved in the substrate recognition, and are sufficient to confer the substrate specificity.</text>
</comment>
<comment type="disruption phenotype">
    <text evidence="6">Fails to produce pneumocandins or any new compound that might correspond to a deacylated peptide core or free dimethylmyristic acid (PubMed:27494047).</text>
</comment>
<comment type="biotechnology">
    <text evidence="4 5 6">Pneumocandin B0 is the starting molecule for the first semisynthetic echinocandin antifungal drug, caspofungin acetate (PubMed:25527531). Pneumocandin B0 is a minor fermentation product, and its industrial production was achieved by a combination of extensive mutation and medium optimization (PubMed:25527531). Inactivation of three of gloP/GLP450-1, gloO/GLP450-2, and gloM/GLOXY1 generates 13 different pneumocandin analogs that lack one, two, three, or four hydroxyl groups on 4R,5R-dihydroxy-ornithine and 3S,4S-dihydroxy-homotyrosine of the parent hexapeptide (PubMed:25879325). All of these cyclic lipopeptides show potent antifungal activities, and two new metabolites pneumocandins F and G are more potent in vitro against Candida species and Aspergillus fumigatus than the principal fermentation products, pneumocandins A0 and B0 (PubMed:25879325). Moreover, feeding alternative side chain precursors yields acrophiarin and 4 additional pneumocandin congeners with straight C14, C15, and C16 side chains. One of those compounds, pneumocandin I, has elevated antifungal activity and similar hemolytic activity compared to pneumocandin B0, the starting molecule for caspofungin, demonstrating the potential for using gloD/GLligase for future engineering of new echinocandin analogs (PubMed:27494047).</text>
</comment>
<comment type="similarity">
    <text evidence="11">Belongs to the ATP-dependent AMP-binding enzyme family.</text>
</comment>
<sequence>MVFTSPSWCQDILMPIPNNELVGEFVMRRGHGLNDVSEDSPSSVCAYTGKSYSIRDIRHNVKSLSKSLSQILGWDFNHGNPEDKVVAVCSLNSIDYVPLTWAIHRLGGICLLLHPTSSASELETLMRKANCKAVFTCKPLMAQCQAAFTAINGDPSNIFLVELPLPEEQPVKISNTTISQLIADGEGLPDLQPLDLQDFDSKERLAYFCPTSGTSGFLKIAKVSHANVMANILQCTTMDSYTTASQTDVTLGILPLSHAYGLLVQHFVTFRGDCIILHPKFDMQIALKSVQQYRIVRLYLVPTIIGALATNPILFKLFDLSSVKRVITGSASLPEQVSKAINQLCPEWEINPGYGLTESFVCMSWTSPNSQYPGSTGCLLPLVEARLLDADGSDITAHGQAGDLLVRSPSVMKEYLDDDLKRDVTFDSDGWLRTGDVATFKQNPKGDSHLFIVDRKKDIMKVKGIQVPPVEIEGHLVAHPAVDDAAVVAISDEDAGERPFAFVVRSQKVMTDIDEKSLKKDISGYIQSTLSEPYWLRQNIRFIDAIPKSHNGKALKFKLKQQLVTSSA</sequence>
<evidence type="ECO:0000250" key="1">
    <source>
        <dbReference type="UniProtKB" id="Q08AH3"/>
    </source>
</evidence>
<evidence type="ECO:0000250" key="2">
    <source>
        <dbReference type="UniProtKB" id="Q42524"/>
    </source>
</evidence>
<evidence type="ECO:0000269" key="3">
    <source>
    </source>
</evidence>
<evidence type="ECO:0000269" key="4">
    <source>
    </source>
</evidence>
<evidence type="ECO:0000269" key="5">
    <source>
    </source>
</evidence>
<evidence type="ECO:0000269" key="6">
    <source>
    </source>
</evidence>
<evidence type="ECO:0000269" key="7">
    <source>
    </source>
</evidence>
<evidence type="ECO:0000303" key="8">
    <source>
    </source>
</evidence>
<evidence type="ECO:0000303" key="9">
    <source>
    </source>
</evidence>
<evidence type="ECO:0000303" key="10">
    <source>
    </source>
</evidence>
<evidence type="ECO:0000305" key="11"/>
<evidence type="ECO:0000305" key="12">
    <source>
    </source>
</evidence>
<evidence type="ECO:0000305" key="13">
    <source>
    </source>
</evidence>
<organism>
    <name type="scientific">Glarea lozoyensis (strain ATCC 20868 / MF5171)</name>
    <dbReference type="NCBI Taxonomy" id="1116229"/>
    <lineage>
        <taxon>Eukaryota</taxon>
        <taxon>Fungi</taxon>
        <taxon>Dikarya</taxon>
        <taxon>Ascomycota</taxon>
        <taxon>Pezizomycotina</taxon>
        <taxon>Leotiomycetes</taxon>
        <taxon>Helotiales</taxon>
        <taxon>Helotiaceae</taxon>
        <taxon>Glarea</taxon>
    </lineage>
</organism>
<feature type="chain" id="PRO_0000444485" description="Acyl-CoA ligase gloD">
    <location>
        <begin position="1"/>
        <end position="568"/>
    </location>
</feature>
<feature type="region of interest" description="SBD1" evidence="2">
    <location>
        <begin position="282"/>
        <end position="352"/>
    </location>
</feature>
<feature type="region of interest" description="SBD2" evidence="2">
    <location>
        <begin position="353"/>
        <end position="415"/>
    </location>
</feature>
<feature type="binding site" evidence="1">
    <location>
        <begin position="211"/>
        <end position="219"/>
    </location>
    <ligand>
        <name>ATP</name>
        <dbReference type="ChEBI" id="CHEBI:30616"/>
    </ligand>
</feature>
<feature type="binding site" evidence="1">
    <location>
        <begin position="352"/>
        <end position="357"/>
    </location>
    <ligand>
        <name>ATP</name>
        <dbReference type="ChEBI" id="CHEBI:30616"/>
    </ligand>
</feature>
<feature type="binding site" evidence="1">
    <location>
        <position position="436"/>
    </location>
    <ligand>
        <name>ATP</name>
        <dbReference type="ChEBI" id="CHEBI:30616"/>
    </ligand>
</feature>
<feature type="binding site" evidence="1">
    <location>
        <position position="455"/>
    </location>
    <ligand>
        <name>ATP</name>
        <dbReference type="ChEBI" id="CHEBI:30616"/>
    </ligand>
</feature>
<feature type="binding site" evidence="1">
    <location>
        <position position="553"/>
    </location>
    <ligand>
        <name>ATP</name>
        <dbReference type="ChEBI" id="CHEBI:30616"/>
    </ligand>
</feature>
<name>GLOD_GLAL2</name>
<gene>
    <name evidence="8" type="primary">gloD</name>
    <name evidence="9" type="synonym">GLligase</name>
    <name type="ORF">GLAREA_10043</name>
</gene>
<dbReference type="EC" id="6.2.1.-" evidence="13"/>
<dbReference type="EMBL" id="KE145356">
    <property type="protein sequence ID" value="EPE34349.1"/>
    <property type="molecule type" value="Genomic_DNA"/>
</dbReference>
<dbReference type="RefSeq" id="XP_008078284.1">
    <property type="nucleotide sequence ID" value="XM_008080093.1"/>
</dbReference>
<dbReference type="SMR" id="S3DB78"/>
<dbReference type="STRING" id="1116229.S3DB78"/>
<dbReference type="GeneID" id="19469090"/>
<dbReference type="KEGG" id="glz:GLAREA_10043"/>
<dbReference type="eggNOG" id="KOG1176">
    <property type="taxonomic scope" value="Eukaryota"/>
</dbReference>
<dbReference type="HOGENOM" id="CLU_000022_59_2_1"/>
<dbReference type="OMA" id="HRIGGIC"/>
<dbReference type="OrthoDB" id="6509636at2759"/>
<dbReference type="Proteomes" id="UP000016922">
    <property type="component" value="Unassembled WGS sequence"/>
</dbReference>
<dbReference type="GO" id="GO:0005524">
    <property type="term" value="F:ATP binding"/>
    <property type="evidence" value="ECO:0007669"/>
    <property type="project" value="UniProtKB-KW"/>
</dbReference>
<dbReference type="GO" id="GO:0016405">
    <property type="term" value="F:CoA-ligase activity"/>
    <property type="evidence" value="ECO:0007669"/>
    <property type="project" value="TreeGrafter"/>
</dbReference>
<dbReference type="Gene3D" id="3.30.300.30">
    <property type="match status" value="1"/>
</dbReference>
<dbReference type="Gene3D" id="3.40.50.12780">
    <property type="entry name" value="N-terminal domain of ligase-like"/>
    <property type="match status" value="1"/>
</dbReference>
<dbReference type="InterPro" id="IPR025110">
    <property type="entry name" value="AMP-bd_C"/>
</dbReference>
<dbReference type="InterPro" id="IPR045851">
    <property type="entry name" value="AMP-bd_C_sf"/>
</dbReference>
<dbReference type="InterPro" id="IPR020845">
    <property type="entry name" value="AMP-binding_CS"/>
</dbReference>
<dbReference type="InterPro" id="IPR000873">
    <property type="entry name" value="AMP-dep_synth/lig_dom"/>
</dbReference>
<dbReference type="InterPro" id="IPR042099">
    <property type="entry name" value="ANL_N_sf"/>
</dbReference>
<dbReference type="PANTHER" id="PTHR24096:SF422">
    <property type="entry name" value="BCDNA.GH02901"/>
    <property type="match status" value="1"/>
</dbReference>
<dbReference type="PANTHER" id="PTHR24096">
    <property type="entry name" value="LONG-CHAIN-FATTY-ACID--COA LIGASE"/>
    <property type="match status" value="1"/>
</dbReference>
<dbReference type="Pfam" id="PF00501">
    <property type="entry name" value="AMP-binding"/>
    <property type="match status" value="1"/>
</dbReference>
<dbReference type="Pfam" id="PF13193">
    <property type="entry name" value="AMP-binding_C"/>
    <property type="match status" value="1"/>
</dbReference>
<dbReference type="SUPFAM" id="SSF56801">
    <property type="entry name" value="Acetyl-CoA synthetase-like"/>
    <property type="match status" value="1"/>
</dbReference>
<dbReference type="PROSITE" id="PS00455">
    <property type="entry name" value="AMP_BINDING"/>
    <property type="match status" value="1"/>
</dbReference>
<reference key="1">
    <citation type="journal article" date="2013" name="BMC Genomics">
        <title>Genomics-driven discovery of the pneumocandin biosynthetic gene cluster in the fungus Glarea lozoyensis.</title>
        <authorList>
            <person name="Chen L."/>
            <person name="Yue Q."/>
            <person name="Zhang X."/>
            <person name="Xiang M."/>
            <person name="Wang C."/>
            <person name="Li S."/>
            <person name="Che Y."/>
            <person name="Ortiz-Lopez F.J."/>
            <person name="Bills G.F."/>
            <person name="Liu X."/>
            <person name="An Z."/>
        </authorList>
    </citation>
    <scope>NUCLEOTIDE SEQUENCE [LARGE SCALE GENOMIC DNA]</scope>
    <scope>IDENTIFICATION</scope>
    <scope>FUNCTION</scope>
    <source>
        <strain>ATCC 20868 / MF5171</strain>
    </source>
</reference>
<reference key="2">
    <citation type="journal article" date="2014" name="ChemBioChem">
        <title>Pneumocandin biosynthesis: involvement of a trans-selective proline hydroxylase.</title>
        <authorList>
            <person name="Houwaart S."/>
            <person name="Youssar L."/>
            <person name="Huettel W."/>
        </authorList>
    </citation>
    <scope>FUNCTION</scope>
</reference>
<reference key="3">
    <citation type="journal article" date="2015" name="ACS Chem. Biol.">
        <title>Genetic manipulation of the pneumocandin biosynthetic pathway for generation of analogues and evaluation of their antifungal activity.</title>
        <authorList>
            <person name="Li Y."/>
            <person name="Chen L."/>
            <person name="Yue Q."/>
            <person name="Liu X."/>
            <person name="An Z."/>
            <person name="Bills G.F."/>
        </authorList>
    </citation>
    <scope>FUNCTION</scope>
    <scope>PATHWAY</scope>
    <scope>BIOTECHNOLOGY</scope>
</reference>
<reference key="4">
    <citation type="journal article" date="2015" name="Appl. Environ. Microbiol.">
        <title>Engineering of Glarea lozoyensis for exclusive production of the pneumocandin B0 precursor of the antifungal drug caspofungin acetate.</title>
        <authorList>
            <person name="Chen L."/>
            <person name="Yue Q."/>
            <person name="Li Y."/>
            <person name="Niu X."/>
            <person name="Xiang M."/>
            <person name="Wang W."/>
            <person name="Bills G.F."/>
            <person name="Liu X."/>
            <person name="An Z."/>
        </authorList>
    </citation>
    <scope>FUNCTION</scope>
    <scope>BIOTECHNOLOGY</scope>
</reference>
<reference key="5">
    <citation type="journal article" date="2016" name="ACS Chem. Biol.">
        <title>Engineering of new pneumocandin side-chain analogues from Glarea lozoyensis by mutasynthesis and evaluation of their antifungal activity.</title>
        <authorList>
            <person name="Chen L."/>
            <person name="Li Y."/>
            <person name="Yue Q."/>
            <person name="Loksztejn A."/>
            <person name="Yokoyama K."/>
            <person name="Felix E.A."/>
            <person name="Liu X."/>
            <person name="Zhang N."/>
            <person name="An Z."/>
            <person name="Bills G.F."/>
        </authorList>
    </citation>
    <scope>FUNCTION</scope>
    <scope>DISRUPTION PHENOTYPE</scope>
    <scope>PATHWAY</scope>
    <scope>BIOTECHNOLOGY</scope>
</reference>
<reference key="6">
    <citation type="journal article" date="2018" name="Appl. Environ. Microbiol.">
        <title>Cryptic production of trans-3-hydroxyproline in echinocandin B biosynthesis.</title>
        <authorList>
            <person name="Mattay J."/>
            <person name="Houwaart S."/>
            <person name="Huettel W."/>
        </authorList>
    </citation>
    <scope>FUNCTION</scope>
</reference>
<reference key="7">
    <citation type="journal article" date="2017" name="Z. Naturforsch. C">
        <title>Structural diversity in echinocandin biosynthesis: the impact of oxidation steps and approaches toward an evolutionary explanation.</title>
        <authorList>
            <person name="Huettel W."/>
        </authorList>
    </citation>
    <scope>REVIEW</scope>
</reference>
<protein>
    <recommendedName>
        <fullName evidence="8">Acyl-CoA ligase gloD</fullName>
        <ecNumber evidence="13">6.2.1.-</ecNumber>
    </recommendedName>
    <alternativeName>
        <fullName evidence="8">Pneumocandin biosynthesis cluster protein D</fullName>
    </alternativeName>
</protein>
<accession>S3DB78</accession>
<keyword id="KW-0067">ATP-binding</keyword>
<keyword id="KW-0436">Ligase</keyword>
<keyword id="KW-0547">Nucleotide-binding</keyword>
<keyword id="KW-1185">Reference proteome</keyword>